<organism>
    <name type="scientific">Shouchella clausii (strain KSM-K16)</name>
    <name type="common">Alkalihalobacillus clausii</name>
    <dbReference type="NCBI Taxonomy" id="66692"/>
    <lineage>
        <taxon>Bacteria</taxon>
        <taxon>Bacillati</taxon>
        <taxon>Bacillota</taxon>
        <taxon>Bacilli</taxon>
        <taxon>Bacillales</taxon>
        <taxon>Bacillaceae</taxon>
        <taxon>Shouchella</taxon>
    </lineage>
</organism>
<comment type="catalytic activity">
    <reaction evidence="1">
        <text>tRNA(Gly) + glycine + ATP = glycyl-tRNA(Gly) + AMP + diphosphate</text>
        <dbReference type="Rhea" id="RHEA:16013"/>
        <dbReference type="Rhea" id="RHEA-COMP:9664"/>
        <dbReference type="Rhea" id="RHEA-COMP:9683"/>
        <dbReference type="ChEBI" id="CHEBI:30616"/>
        <dbReference type="ChEBI" id="CHEBI:33019"/>
        <dbReference type="ChEBI" id="CHEBI:57305"/>
        <dbReference type="ChEBI" id="CHEBI:78442"/>
        <dbReference type="ChEBI" id="CHEBI:78522"/>
        <dbReference type="ChEBI" id="CHEBI:456215"/>
        <dbReference type="EC" id="6.1.1.14"/>
    </reaction>
</comment>
<comment type="subunit">
    <text evidence="1">Tetramer of two alpha and two beta subunits.</text>
</comment>
<comment type="subcellular location">
    <subcellularLocation>
        <location evidence="1">Cytoplasm</location>
    </subcellularLocation>
</comment>
<comment type="similarity">
    <text evidence="1">Belongs to the class-II aminoacyl-tRNA synthetase family.</text>
</comment>
<name>SYGB_SHOC1</name>
<evidence type="ECO:0000255" key="1">
    <source>
        <dbReference type="HAMAP-Rule" id="MF_00255"/>
    </source>
</evidence>
<protein>
    <recommendedName>
        <fullName evidence="1">Glycine--tRNA ligase beta subunit</fullName>
        <ecNumber evidence="1">6.1.1.14</ecNumber>
    </recommendedName>
    <alternativeName>
        <fullName evidence="1">Glycyl-tRNA synthetase beta subunit</fullName>
        <shortName evidence="1">GlyRS</shortName>
    </alternativeName>
</protein>
<proteinExistence type="inferred from homology"/>
<gene>
    <name evidence="1" type="primary">glyS</name>
    <name type="ordered locus">ABC1685</name>
</gene>
<accession>Q5WHD5</accession>
<reference key="1">
    <citation type="submission" date="2003-10" db="EMBL/GenBank/DDBJ databases">
        <title>The complete genome sequence of the alkaliphilic Bacillus clausii KSM-K16.</title>
        <authorList>
            <person name="Takaki Y."/>
            <person name="Kageyama Y."/>
            <person name="Shimamura S."/>
            <person name="Suzuki H."/>
            <person name="Nishi S."/>
            <person name="Hatada Y."/>
            <person name="Kawai S."/>
            <person name="Ito S."/>
            <person name="Horikoshi K."/>
        </authorList>
    </citation>
    <scope>NUCLEOTIDE SEQUENCE [LARGE SCALE GENOMIC DNA]</scope>
    <source>
        <strain>KSM-K16</strain>
    </source>
</reference>
<sequence length="693" mass="77516">MNKPFLLELGLEELPARFVTPSITQLAEKVQAWLDDKGLSYGEIHSYATPRRLAILVENLADRQPDIHDESRGPALKIAKDESGAWTKAALGFAKGQGVETSQLEIKAVNGTDYVFAKTHKKGEKTSVLLPELKELITGLTFPKSMRWNTYSLRYARPIQWLVALYGEDVIPFSINGIETGRNTTGHRFLGADFPLDNPIEYADALKRQYVIADAEERKAAIVSQLKQMEEEHSWVVPIDEALLEEVTQLVEYPTALSGSFDDSFLALPKEVLITTMREHQRYFPVEAKDGRLLPYFITVRNGNEEYIENVAKGNEKVLRARLSDAAFFYHEDQKISLQAANAKLDNIVFHEAIGTMGEKVARIGELSKWLAGEANLGAQERQTVERAAAIAKFDLVTYMVGEFPELQGRMGQEYAEKAGETPQVAKAIYEQYLPRYAGDKVPETEAGAVLALADKLDTVVSCFSIGLIPTGSQDPYALRRQATGIIHILLQTEMPLTLENMAVHALDSIAKKGFMTEKVETTKQELISFFANRLKHVMLEAGFRYDIVDAVLAAPLVDVYTMFAKARLLTERAEDREFKEVTESLSRVTNLAKKAPKGVFVSENLFENETESRLLAATLEVEFGLAEAWKVKDAYAAYQALAQCRATINTFFDHTMVMADNEATRNNRLALLDRLAKSIQSYADFQKIVFSA</sequence>
<dbReference type="EC" id="6.1.1.14" evidence="1"/>
<dbReference type="EMBL" id="AP006627">
    <property type="protein sequence ID" value="BAD64220.1"/>
    <property type="molecule type" value="Genomic_DNA"/>
</dbReference>
<dbReference type="RefSeq" id="WP_011246529.1">
    <property type="nucleotide sequence ID" value="NC_006582.1"/>
</dbReference>
<dbReference type="SMR" id="Q5WHD5"/>
<dbReference type="STRING" id="66692.ABC1685"/>
<dbReference type="KEGG" id="bcl:ABC1685"/>
<dbReference type="eggNOG" id="COG0751">
    <property type="taxonomic scope" value="Bacteria"/>
</dbReference>
<dbReference type="HOGENOM" id="CLU_007220_2_2_9"/>
<dbReference type="OrthoDB" id="9775440at2"/>
<dbReference type="Proteomes" id="UP000001168">
    <property type="component" value="Chromosome"/>
</dbReference>
<dbReference type="GO" id="GO:0005829">
    <property type="term" value="C:cytosol"/>
    <property type="evidence" value="ECO:0007669"/>
    <property type="project" value="TreeGrafter"/>
</dbReference>
<dbReference type="GO" id="GO:0004814">
    <property type="term" value="F:arginine-tRNA ligase activity"/>
    <property type="evidence" value="ECO:0007669"/>
    <property type="project" value="InterPro"/>
</dbReference>
<dbReference type="GO" id="GO:0005524">
    <property type="term" value="F:ATP binding"/>
    <property type="evidence" value="ECO:0007669"/>
    <property type="project" value="UniProtKB-UniRule"/>
</dbReference>
<dbReference type="GO" id="GO:0004820">
    <property type="term" value="F:glycine-tRNA ligase activity"/>
    <property type="evidence" value="ECO:0007669"/>
    <property type="project" value="UniProtKB-UniRule"/>
</dbReference>
<dbReference type="GO" id="GO:0006420">
    <property type="term" value="P:arginyl-tRNA aminoacylation"/>
    <property type="evidence" value="ECO:0007669"/>
    <property type="project" value="InterPro"/>
</dbReference>
<dbReference type="GO" id="GO:0006426">
    <property type="term" value="P:glycyl-tRNA aminoacylation"/>
    <property type="evidence" value="ECO:0007669"/>
    <property type="project" value="UniProtKB-UniRule"/>
</dbReference>
<dbReference type="HAMAP" id="MF_00255">
    <property type="entry name" value="Gly_tRNA_synth_beta"/>
    <property type="match status" value="1"/>
</dbReference>
<dbReference type="InterPro" id="IPR008909">
    <property type="entry name" value="DALR_anticod-bd"/>
</dbReference>
<dbReference type="InterPro" id="IPR015944">
    <property type="entry name" value="Gly-tRNA-synth_bsu"/>
</dbReference>
<dbReference type="InterPro" id="IPR006194">
    <property type="entry name" value="Gly-tRNA-synth_heterodimer"/>
</dbReference>
<dbReference type="NCBIfam" id="TIGR00211">
    <property type="entry name" value="glyS"/>
    <property type="match status" value="1"/>
</dbReference>
<dbReference type="PANTHER" id="PTHR30075:SF2">
    <property type="entry name" value="GLYCINE--TRNA LIGASE, CHLOROPLASTIC_MITOCHONDRIAL 2"/>
    <property type="match status" value="1"/>
</dbReference>
<dbReference type="PANTHER" id="PTHR30075">
    <property type="entry name" value="GLYCYL-TRNA SYNTHETASE"/>
    <property type="match status" value="1"/>
</dbReference>
<dbReference type="Pfam" id="PF05746">
    <property type="entry name" value="DALR_1"/>
    <property type="match status" value="1"/>
</dbReference>
<dbReference type="Pfam" id="PF02092">
    <property type="entry name" value="tRNA_synt_2f"/>
    <property type="match status" value="1"/>
</dbReference>
<dbReference type="PRINTS" id="PR01045">
    <property type="entry name" value="TRNASYNTHGB"/>
</dbReference>
<dbReference type="SUPFAM" id="SSF109604">
    <property type="entry name" value="HD-domain/PDEase-like"/>
    <property type="match status" value="1"/>
</dbReference>
<dbReference type="PROSITE" id="PS50861">
    <property type="entry name" value="AA_TRNA_LIGASE_II_GLYAB"/>
    <property type="match status" value="1"/>
</dbReference>
<feature type="chain" id="PRO_1000006351" description="Glycine--tRNA ligase beta subunit">
    <location>
        <begin position="1"/>
        <end position="693"/>
    </location>
</feature>
<keyword id="KW-0030">Aminoacyl-tRNA synthetase</keyword>
<keyword id="KW-0067">ATP-binding</keyword>
<keyword id="KW-0963">Cytoplasm</keyword>
<keyword id="KW-0436">Ligase</keyword>
<keyword id="KW-0547">Nucleotide-binding</keyword>
<keyword id="KW-0648">Protein biosynthesis</keyword>
<keyword id="KW-1185">Reference proteome</keyword>